<name>YCF3_OENEH</name>
<evidence type="ECO:0000255" key="1">
    <source>
        <dbReference type="HAMAP-Rule" id="MF_00439"/>
    </source>
</evidence>
<geneLocation type="chloroplast"/>
<gene>
    <name evidence="1" type="primary">ycf3</name>
</gene>
<protein>
    <recommendedName>
        <fullName evidence="1">Photosystem I assembly protein Ycf3</fullName>
    </recommendedName>
</protein>
<organism>
    <name type="scientific">Oenothera elata subsp. hookeri</name>
    <name type="common">Hooker's evening primrose</name>
    <name type="synonym">Oenothera hookeri</name>
    <dbReference type="NCBI Taxonomy" id="85636"/>
    <lineage>
        <taxon>Eukaryota</taxon>
        <taxon>Viridiplantae</taxon>
        <taxon>Streptophyta</taxon>
        <taxon>Embryophyta</taxon>
        <taxon>Tracheophyta</taxon>
        <taxon>Spermatophyta</taxon>
        <taxon>Magnoliopsida</taxon>
        <taxon>eudicotyledons</taxon>
        <taxon>Gunneridae</taxon>
        <taxon>Pentapetalae</taxon>
        <taxon>rosids</taxon>
        <taxon>malvids</taxon>
        <taxon>Myrtales</taxon>
        <taxon>Onagraceae</taxon>
        <taxon>Onagroideae</taxon>
        <taxon>Onagreae</taxon>
        <taxon>Oenothera</taxon>
    </lineage>
</organism>
<feature type="chain" id="PRO_0000217813" description="Photosystem I assembly protein Ycf3">
    <location>
        <begin position="1"/>
        <end position="168"/>
    </location>
</feature>
<feature type="repeat" description="TPR 1">
    <location>
        <begin position="35"/>
        <end position="68"/>
    </location>
</feature>
<feature type="repeat" description="TPR 2">
    <location>
        <begin position="72"/>
        <end position="105"/>
    </location>
</feature>
<feature type="repeat" description="TPR 3">
    <location>
        <begin position="120"/>
        <end position="153"/>
    </location>
</feature>
<dbReference type="EMBL" id="AJ271079">
    <property type="protein sequence ID" value="CAB67135.2"/>
    <property type="molecule type" value="Genomic_DNA"/>
</dbReference>
<dbReference type="RefSeq" id="NP_084670.3">
    <property type="nucleotide sequence ID" value="NC_002693.2"/>
</dbReference>
<dbReference type="SMR" id="Q9MTP0"/>
<dbReference type="GeneID" id="802796"/>
<dbReference type="GO" id="GO:0009535">
    <property type="term" value="C:chloroplast thylakoid membrane"/>
    <property type="evidence" value="ECO:0007669"/>
    <property type="project" value="UniProtKB-SubCell"/>
</dbReference>
<dbReference type="GO" id="GO:0015979">
    <property type="term" value="P:photosynthesis"/>
    <property type="evidence" value="ECO:0007669"/>
    <property type="project" value="UniProtKB-UniRule"/>
</dbReference>
<dbReference type="FunFam" id="1.25.40.10:FF:000004">
    <property type="entry name" value="Photosystem I assembly protein Ycf3"/>
    <property type="match status" value="1"/>
</dbReference>
<dbReference type="Gene3D" id="1.25.40.10">
    <property type="entry name" value="Tetratricopeptide repeat domain"/>
    <property type="match status" value="1"/>
</dbReference>
<dbReference type="HAMAP" id="MF_00439">
    <property type="entry name" value="Ycf3"/>
    <property type="match status" value="1"/>
</dbReference>
<dbReference type="InterPro" id="IPR022818">
    <property type="entry name" value="PSI_Ycf3_assembly"/>
</dbReference>
<dbReference type="InterPro" id="IPR011990">
    <property type="entry name" value="TPR-like_helical_dom_sf"/>
</dbReference>
<dbReference type="InterPro" id="IPR019734">
    <property type="entry name" value="TPR_rpt"/>
</dbReference>
<dbReference type="InterPro" id="IPR051685">
    <property type="entry name" value="Ycf3/AcsC/BcsC/TPR_MFPF"/>
</dbReference>
<dbReference type="NCBIfam" id="NF002725">
    <property type="entry name" value="PRK02603.1"/>
    <property type="match status" value="1"/>
</dbReference>
<dbReference type="PANTHER" id="PTHR44943">
    <property type="entry name" value="CELLULOSE SYNTHASE OPERON PROTEIN C"/>
    <property type="match status" value="1"/>
</dbReference>
<dbReference type="PANTHER" id="PTHR44943:SF8">
    <property type="entry name" value="TPR REPEAT-CONTAINING PROTEIN MJ0263"/>
    <property type="match status" value="1"/>
</dbReference>
<dbReference type="Pfam" id="PF00515">
    <property type="entry name" value="TPR_1"/>
    <property type="match status" value="1"/>
</dbReference>
<dbReference type="SMART" id="SM00028">
    <property type="entry name" value="TPR"/>
    <property type="match status" value="3"/>
</dbReference>
<dbReference type="SUPFAM" id="SSF48452">
    <property type="entry name" value="TPR-like"/>
    <property type="match status" value="1"/>
</dbReference>
<dbReference type="PROSITE" id="PS50005">
    <property type="entry name" value="TPR"/>
    <property type="match status" value="3"/>
</dbReference>
<dbReference type="PROSITE" id="PS50293">
    <property type="entry name" value="TPR_REGION"/>
    <property type="match status" value="2"/>
</dbReference>
<accession>Q9MTP0</accession>
<sequence>MPRSRINGNFIDKTFSIVANILLRIIPTTSGEKEAFTYYRDGMSAQSEGNYAEALQNYYEAMRLEIDPYDRSYILYNIGLIHTSNGEHTKALEYYFRALERNPFLPQAFNNMAVICHYRGEQAIRQGDSEIAEAWFDQAAEYWKQAIALTPGNYIEAQNWLKITRRFE</sequence>
<proteinExistence type="inferred from homology"/>
<reference key="1">
    <citation type="journal article" date="2000" name="Mol. Gen. Genet.">
        <title>Complete nucleotide sequence of the Oenothera elata plastid chromosome, representing plastome I of the five distinguishable Euoenothera plastomes.</title>
        <authorList>
            <person name="Hupfer H."/>
            <person name="Swiatek M."/>
            <person name="Hornung S."/>
            <person name="Herrmann R.G."/>
            <person name="Maier R.M."/>
            <person name="Chiu W.-L."/>
            <person name="Sears B."/>
        </authorList>
    </citation>
    <scope>NUCLEOTIDE SEQUENCE [LARGE SCALE GENOMIC DNA]</scope>
    <source>
        <strain>cv. Johansen</strain>
    </source>
</reference>
<reference key="2">
    <citation type="journal article" date="2008" name="Nucleic Acids Res.">
        <title>The complete nucleotide sequences of the five genetically distinct plastid genomes of Oenothera, subsection Oenothera: I. Sequence evaluation and plastome evolution.</title>
        <authorList>
            <person name="Greiner S."/>
            <person name="Wang X."/>
            <person name="Rauwolf U."/>
            <person name="Silber M.V."/>
            <person name="Mayer K."/>
            <person name="Meurer J."/>
            <person name="Haberer G."/>
            <person name="Herrmann R.G."/>
        </authorList>
    </citation>
    <scope>SEQUENCE REVISION TO 10-13 AND 74</scope>
</reference>
<keyword id="KW-0150">Chloroplast</keyword>
<keyword id="KW-0472">Membrane</keyword>
<keyword id="KW-0602">Photosynthesis</keyword>
<keyword id="KW-0934">Plastid</keyword>
<keyword id="KW-0677">Repeat</keyword>
<keyword id="KW-0793">Thylakoid</keyword>
<keyword id="KW-0802">TPR repeat</keyword>
<comment type="function">
    <text evidence="1">Essential for the assembly of the photosystem I (PSI) complex. May act as a chaperone-like factor to guide the assembly of the PSI subunits.</text>
</comment>
<comment type="subcellular location">
    <subcellularLocation>
        <location evidence="1">Plastid</location>
        <location evidence="1">Chloroplast thylakoid membrane</location>
        <topology evidence="1">Peripheral membrane protein</topology>
    </subcellularLocation>
</comment>
<comment type="similarity">
    <text evidence="1">Belongs to the Ycf3 family.</text>
</comment>